<keyword id="KW-0560">Oxidoreductase</keyword>
<keyword id="KW-1185">Reference proteome</keyword>
<feature type="chain" id="PRO_1000045639" description="Probable glycine dehydrogenase (decarboxylating) subunit 1">
    <location>
        <begin position="1"/>
        <end position="448"/>
    </location>
</feature>
<accession>Q65HG0</accession>
<accession>Q62SW4</accession>
<protein>
    <recommendedName>
        <fullName evidence="1">Probable glycine dehydrogenase (decarboxylating) subunit 1</fullName>
        <ecNumber evidence="1">1.4.4.2</ecNumber>
    </recommendedName>
    <alternativeName>
        <fullName evidence="1">Glycine cleavage system P-protein subunit 1</fullName>
    </alternativeName>
    <alternativeName>
        <fullName evidence="1">Glycine decarboxylase subunit 1</fullName>
    </alternativeName>
    <alternativeName>
        <fullName evidence="1">Glycine dehydrogenase (aminomethyl-transferring) subunit 1</fullName>
    </alternativeName>
</protein>
<sequence>MKHRYLPATDQDKKEMLEAIGVERIDELFSDIPESVRFKGEYQIKKAKSETELTKELTKLAAKNKDTVTYASFLGAGVYDHYQPVIVDHVISRSEFYTAYTPYQPEISQGELQAIFEFQTMICELTGMDISNSSMYDGGTALAEAAMLASGHTKKKKIVVSETVHPESREVLKTYAKGQYIDVVEVPSKNGTADLEALDEAVCEDTAAVIVQYPNFFGRIEPLKDIKPIAHKGKSMFIVSANPLALGLLTPPGALGADIVVGDAQPFGIPAAFGGPHCGFFAVTKKLMRKVPGRLVGQTEDENGKRGFVLTLQAREQHIRRDKATSNICSNQALNALAASVAMTALGKKGVKEIAWQNLQKAAYAKEAAKRAGLEVAFEGPMFNEFVIRLNEPVEKANERLLEKNIIGGYDLGASYPDLKRHMLIAVTELRTKEEIDTLMNELGDCHE</sequence>
<proteinExistence type="inferred from homology"/>
<reference key="1">
    <citation type="journal article" date="2004" name="J. Mol. Microbiol. Biotechnol.">
        <title>The complete genome sequence of Bacillus licheniformis DSM13, an organism with great industrial potential.</title>
        <authorList>
            <person name="Veith B."/>
            <person name="Herzberg C."/>
            <person name="Steckel S."/>
            <person name="Feesche J."/>
            <person name="Maurer K.H."/>
            <person name="Ehrenreich P."/>
            <person name="Baeumer S."/>
            <person name="Henne A."/>
            <person name="Liesegang H."/>
            <person name="Merkl R."/>
            <person name="Ehrenreich A."/>
            <person name="Gottschalk G."/>
        </authorList>
    </citation>
    <scope>NUCLEOTIDE SEQUENCE [LARGE SCALE GENOMIC DNA]</scope>
    <source>
        <strain>ATCC 14580 / DSM 13 / JCM 2505 / CCUG 7422 / NBRC 12200 / NCIMB 9375 / NCTC 10341 / NRRL NRS-1264 / Gibson 46</strain>
    </source>
</reference>
<reference key="2">
    <citation type="journal article" date="2004" name="Genome Biol.">
        <title>Complete genome sequence of the industrial bacterium Bacillus licheniformis and comparisons with closely related Bacillus species.</title>
        <authorList>
            <person name="Rey M.W."/>
            <person name="Ramaiya P."/>
            <person name="Nelson B.A."/>
            <person name="Brody-Karpin S.D."/>
            <person name="Zaretsky E.J."/>
            <person name="Tang M."/>
            <person name="Lopez de Leon A."/>
            <person name="Xiang H."/>
            <person name="Gusti V."/>
            <person name="Clausen I.G."/>
            <person name="Olsen P.B."/>
            <person name="Rasmussen M.D."/>
            <person name="Andersen J.T."/>
            <person name="Joergensen P.L."/>
            <person name="Larsen T.S."/>
            <person name="Sorokin A."/>
            <person name="Bolotin A."/>
            <person name="Lapidus A."/>
            <person name="Galleron N."/>
            <person name="Ehrlich S.D."/>
            <person name="Berka R.M."/>
        </authorList>
    </citation>
    <scope>NUCLEOTIDE SEQUENCE [LARGE SCALE GENOMIC DNA]</scope>
    <source>
        <strain>ATCC 14580 / DSM 13 / JCM 2505 / CCUG 7422 / NBRC 12200 / NCIMB 9375 / NCTC 10341 / NRRL NRS-1264 / Gibson 46</strain>
    </source>
</reference>
<organism>
    <name type="scientific">Bacillus licheniformis (strain ATCC 14580 / DSM 13 / JCM 2505 / CCUG 7422 / NBRC 12200 / NCIMB 9375 / NCTC 10341 / NRRL NRS-1264 / Gibson 46)</name>
    <dbReference type="NCBI Taxonomy" id="279010"/>
    <lineage>
        <taxon>Bacteria</taxon>
        <taxon>Bacillati</taxon>
        <taxon>Bacillota</taxon>
        <taxon>Bacilli</taxon>
        <taxon>Bacillales</taxon>
        <taxon>Bacillaceae</taxon>
        <taxon>Bacillus</taxon>
    </lineage>
</organism>
<evidence type="ECO:0000255" key="1">
    <source>
        <dbReference type="HAMAP-Rule" id="MF_00712"/>
    </source>
</evidence>
<name>GCSPA_BACLD</name>
<comment type="function">
    <text evidence="1">The glycine cleavage system catalyzes the degradation of glycine. The P protein binds the alpha-amino group of glycine through its pyridoxal phosphate cofactor; CO(2) is released and the remaining methylamine moiety is then transferred to the lipoamide cofactor of the H protein.</text>
</comment>
<comment type="catalytic activity">
    <reaction evidence="1">
        <text>N(6)-[(R)-lipoyl]-L-lysyl-[glycine-cleavage complex H protein] + glycine + H(+) = N(6)-[(R)-S(8)-aminomethyldihydrolipoyl]-L-lysyl-[glycine-cleavage complex H protein] + CO2</text>
        <dbReference type="Rhea" id="RHEA:24304"/>
        <dbReference type="Rhea" id="RHEA-COMP:10494"/>
        <dbReference type="Rhea" id="RHEA-COMP:10495"/>
        <dbReference type="ChEBI" id="CHEBI:15378"/>
        <dbReference type="ChEBI" id="CHEBI:16526"/>
        <dbReference type="ChEBI" id="CHEBI:57305"/>
        <dbReference type="ChEBI" id="CHEBI:83099"/>
        <dbReference type="ChEBI" id="CHEBI:83143"/>
        <dbReference type="EC" id="1.4.4.2"/>
    </reaction>
</comment>
<comment type="subunit">
    <text evidence="1">The glycine cleavage system is composed of four proteins: P, T, L and H. In this organism, the P 'protein' is a heterodimer of two subunits.</text>
</comment>
<comment type="similarity">
    <text evidence="1">Belongs to the GcvP family. N-terminal subunit subfamily.</text>
</comment>
<dbReference type="EC" id="1.4.4.2" evidence="1"/>
<dbReference type="EMBL" id="CP000002">
    <property type="protein sequence ID" value="AAU24145.1"/>
    <property type="molecule type" value="Genomic_DNA"/>
</dbReference>
<dbReference type="EMBL" id="AE017333">
    <property type="protein sequence ID" value="AAU41504.1"/>
    <property type="molecule type" value="Genomic_DNA"/>
</dbReference>
<dbReference type="RefSeq" id="WP_003183435.1">
    <property type="nucleotide sequence ID" value="NC_006322.1"/>
</dbReference>
<dbReference type="SMR" id="Q65HG0"/>
<dbReference type="STRING" id="279010.BL01561"/>
<dbReference type="GeneID" id="92860775"/>
<dbReference type="KEGG" id="bld:BLi02630"/>
<dbReference type="KEGG" id="bli:BL01561"/>
<dbReference type="eggNOG" id="COG0403">
    <property type="taxonomic scope" value="Bacteria"/>
</dbReference>
<dbReference type="HOGENOM" id="CLU_004620_0_2_9"/>
<dbReference type="Proteomes" id="UP000000606">
    <property type="component" value="Chromosome"/>
</dbReference>
<dbReference type="GO" id="GO:0004375">
    <property type="term" value="F:glycine dehydrogenase (decarboxylating) activity"/>
    <property type="evidence" value="ECO:0007669"/>
    <property type="project" value="UniProtKB-EC"/>
</dbReference>
<dbReference type="GO" id="GO:0019464">
    <property type="term" value="P:glycine decarboxylation via glycine cleavage system"/>
    <property type="evidence" value="ECO:0007669"/>
    <property type="project" value="UniProtKB-UniRule"/>
</dbReference>
<dbReference type="GO" id="GO:0009116">
    <property type="term" value="P:nucleoside metabolic process"/>
    <property type="evidence" value="ECO:0007669"/>
    <property type="project" value="InterPro"/>
</dbReference>
<dbReference type="CDD" id="cd00613">
    <property type="entry name" value="GDC-P"/>
    <property type="match status" value="1"/>
</dbReference>
<dbReference type="FunFam" id="3.40.640.10:FF:000113">
    <property type="entry name" value="Probable glycine dehydrogenase (decarboxylating) subunit 1"/>
    <property type="match status" value="1"/>
</dbReference>
<dbReference type="Gene3D" id="3.90.1150.10">
    <property type="entry name" value="Aspartate Aminotransferase, domain 1"/>
    <property type="match status" value="1"/>
</dbReference>
<dbReference type="Gene3D" id="3.40.640.10">
    <property type="entry name" value="Type I PLP-dependent aspartate aminotransferase-like (Major domain)"/>
    <property type="match status" value="1"/>
</dbReference>
<dbReference type="HAMAP" id="MF_00712">
    <property type="entry name" value="GcvPA"/>
    <property type="match status" value="1"/>
</dbReference>
<dbReference type="InterPro" id="IPR023010">
    <property type="entry name" value="GcvPA"/>
</dbReference>
<dbReference type="InterPro" id="IPR049315">
    <property type="entry name" value="GDC-P_N"/>
</dbReference>
<dbReference type="InterPro" id="IPR020581">
    <property type="entry name" value="GDC_P"/>
</dbReference>
<dbReference type="InterPro" id="IPR015424">
    <property type="entry name" value="PyrdxlP-dep_Trfase"/>
</dbReference>
<dbReference type="InterPro" id="IPR015421">
    <property type="entry name" value="PyrdxlP-dep_Trfase_major"/>
</dbReference>
<dbReference type="InterPro" id="IPR015422">
    <property type="entry name" value="PyrdxlP-dep_Trfase_small"/>
</dbReference>
<dbReference type="NCBIfam" id="NF001696">
    <property type="entry name" value="PRK00451.1"/>
    <property type="match status" value="1"/>
</dbReference>
<dbReference type="PANTHER" id="PTHR42806">
    <property type="entry name" value="GLYCINE CLEAVAGE SYSTEM P-PROTEIN"/>
    <property type="match status" value="1"/>
</dbReference>
<dbReference type="PANTHER" id="PTHR42806:SF1">
    <property type="entry name" value="GLYCINE DEHYDROGENASE (DECARBOXYLATING)"/>
    <property type="match status" value="1"/>
</dbReference>
<dbReference type="Pfam" id="PF02347">
    <property type="entry name" value="GDC-P"/>
    <property type="match status" value="1"/>
</dbReference>
<dbReference type="PIRSF" id="PIRSF006815">
    <property type="entry name" value="GcvPA"/>
    <property type="match status" value="1"/>
</dbReference>
<dbReference type="SUPFAM" id="SSF53383">
    <property type="entry name" value="PLP-dependent transferases"/>
    <property type="match status" value="1"/>
</dbReference>
<gene>
    <name evidence="1" type="primary">gcvPA</name>
    <name type="ordered locus">BLi02630</name>
    <name type="ordered locus">BL01561</name>
</gene>